<sequence>MMNMQNMMKQAQKLQKQMEQKQADLAATSFSGKSAQELVTATFTGDKRLVNITFKEAVVDPEDIETLQDMTTQAINDALTQIDEATKKSLGAFAGKLPF</sequence>
<evidence type="ECO:0000255" key="1">
    <source>
        <dbReference type="HAMAP-Rule" id="MF_00274"/>
    </source>
</evidence>
<protein>
    <recommendedName>
        <fullName evidence="1">Nucleoid-associated protein SZO_16661</fullName>
    </recommendedName>
</protein>
<dbReference type="EMBL" id="FM204884">
    <property type="protein sequence ID" value="CAX00436.1"/>
    <property type="molecule type" value="Genomic_DNA"/>
</dbReference>
<dbReference type="SMR" id="C0MEQ5"/>
<dbReference type="KEGG" id="seq:SZO_16661"/>
<dbReference type="eggNOG" id="COG0718">
    <property type="taxonomic scope" value="Bacteria"/>
</dbReference>
<dbReference type="HOGENOM" id="CLU_140930_1_1_9"/>
<dbReference type="Proteomes" id="UP000001368">
    <property type="component" value="Chromosome"/>
</dbReference>
<dbReference type="GO" id="GO:0043590">
    <property type="term" value="C:bacterial nucleoid"/>
    <property type="evidence" value="ECO:0007669"/>
    <property type="project" value="UniProtKB-UniRule"/>
</dbReference>
<dbReference type="GO" id="GO:0005829">
    <property type="term" value="C:cytosol"/>
    <property type="evidence" value="ECO:0007669"/>
    <property type="project" value="TreeGrafter"/>
</dbReference>
<dbReference type="GO" id="GO:0003677">
    <property type="term" value="F:DNA binding"/>
    <property type="evidence" value="ECO:0007669"/>
    <property type="project" value="UniProtKB-UniRule"/>
</dbReference>
<dbReference type="Gene3D" id="3.30.1310.10">
    <property type="entry name" value="Nucleoid-associated protein YbaB-like domain"/>
    <property type="match status" value="1"/>
</dbReference>
<dbReference type="HAMAP" id="MF_00274">
    <property type="entry name" value="DNA_YbaB_EbfC"/>
    <property type="match status" value="1"/>
</dbReference>
<dbReference type="InterPro" id="IPR036894">
    <property type="entry name" value="YbaB-like_sf"/>
</dbReference>
<dbReference type="InterPro" id="IPR004401">
    <property type="entry name" value="YbaB/EbfC"/>
</dbReference>
<dbReference type="NCBIfam" id="TIGR00103">
    <property type="entry name" value="DNA_YbaB_EbfC"/>
    <property type="match status" value="1"/>
</dbReference>
<dbReference type="PANTHER" id="PTHR33449">
    <property type="entry name" value="NUCLEOID-ASSOCIATED PROTEIN YBAB"/>
    <property type="match status" value="1"/>
</dbReference>
<dbReference type="PANTHER" id="PTHR33449:SF1">
    <property type="entry name" value="NUCLEOID-ASSOCIATED PROTEIN YBAB"/>
    <property type="match status" value="1"/>
</dbReference>
<dbReference type="Pfam" id="PF02575">
    <property type="entry name" value="YbaB_DNA_bd"/>
    <property type="match status" value="1"/>
</dbReference>
<dbReference type="PIRSF" id="PIRSF004555">
    <property type="entry name" value="UCP004555"/>
    <property type="match status" value="1"/>
</dbReference>
<dbReference type="SUPFAM" id="SSF82607">
    <property type="entry name" value="YbaB-like"/>
    <property type="match status" value="1"/>
</dbReference>
<feature type="chain" id="PRO_1000204781" description="Nucleoid-associated protein SZO_16661">
    <location>
        <begin position="1"/>
        <end position="99"/>
    </location>
</feature>
<gene>
    <name type="ordered locus">SZO_16661</name>
</gene>
<organism>
    <name type="scientific">Streptococcus equi subsp. zooepidemicus (strain H70)</name>
    <dbReference type="NCBI Taxonomy" id="553483"/>
    <lineage>
        <taxon>Bacteria</taxon>
        <taxon>Bacillati</taxon>
        <taxon>Bacillota</taxon>
        <taxon>Bacilli</taxon>
        <taxon>Lactobacillales</taxon>
        <taxon>Streptococcaceae</taxon>
        <taxon>Streptococcus</taxon>
    </lineage>
</organism>
<reference key="1">
    <citation type="journal article" date="2009" name="PLoS Pathog.">
        <title>Genomic evidence for the evolution of Streptococcus equi: host restriction, increased virulence, and genetic exchange with human pathogens.</title>
        <authorList>
            <person name="Holden M.T.G."/>
            <person name="Heather Z."/>
            <person name="Paillot R."/>
            <person name="Steward K.F."/>
            <person name="Webb K."/>
            <person name="Ainslie F."/>
            <person name="Jourdan T."/>
            <person name="Bason N.C."/>
            <person name="Holroyd N.E."/>
            <person name="Mungall K."/>
            <person name="Quail M.A."/>
            <person name="Sanders M."/>
            <person name="Simmonds M."/>
            <person name="Willey D."/>
            <person name="Brooks K."/>
            <person name="Aanensen D.M."/>
            <person name="Spratt B.G."/>
            <person name="Jolley K.A."/>
            <person name="Maiden M.C.J."/>
            <person name="Kehoe M."/>
            <person name="Chanter N."/>
            <person name="Bentley S.D."/>
            <person name="Robinson C."/>
            <person name="Maskell D.J."/>
            <person name="Parkhill J."/>
            <person name="Waller A.S."/>
        </authorList>
    </citation>
    <scope>NUCLEOTIDE SEQUENCE [LARGE SCALE GENOMIC DNA]</scope>
    <source>
        <strain>H70</strain>
    </source>
</reference>
<name>Y1666_STRS7</name>
<comment type="function">
    <text evidence="1">Binds to DNA and alters its conformation. May be involved in regulation of gene expression, nucleoid organization and DNA protection.</text>
</comment>
<comment type="subunit">
    <text evidence="1">Homodimer.</text>
</comment>
<comment type="subcellular location">
    <subcellularLocation>
        <location evidence="1">Cytoplasm</location>
        <location evidence="1">Nucleoid</location>
    </subcellularLocation>
</comment>
<comment type="similarity">
    <text evidence="1">Belongs to the YbaB/EbfC family.</text>
</comment>
<proteinExistence type="inferred from homology"/>
<accession>C0MEQ5</accession>
<keyword id="KW-0963">Cytoplasm</keyword>
<keyword id="KW-0238">DNA-binding</keyword>